<accession>B9FXT3</accession>
<accession>C7J4L7</accession>
<accession>Q58GE3</accession>
<accession>Q84ZC1</accession>
<comment type="function">
    <text evidence="3 4">Transcription factor that plays a crucial role in tapetum development. Required for male fertility and pollen differentiation within the developing anther. Plays a major role in maintaining tapetum development, starting in early meiosis. Required for pollen mother cell meiosis. May regulate the anther-specific cysteine protease CP1 and lipid-transfer proteins C4 and C6 (PubMed:16141453). Required for anther development. Functions in parallel with GAMYB to regulate early anther development. Functions upstream of the transcription factor TDR and may positively regulate its transcription (PubMed:20590996).</text>
</comment>
<comment type="subcellular location">
    <subcellularLocation>
        <location evidence="1 3">Nucleus</location>
    </subcellularLocation>
</comment>
<comment type="developmental stage">
    <text evidence="3">During anther development, expressed at the late premeiosis and meiosis stages in both the anther wall and the microspores. After meiosis, expressed in the tapetum, connective tissue, and vascular bundles.</text>
</comment>
<comment type="disruption phenotype">
    <text evidence="3">Male sterility due to failure of tapetum to differentiate and pollen to mature.</text>
</comment>
<comment type="similarity">
    <text>Belongs to the bHLH protein family.</text>
</comment>
<comment type="caution">
    <text evidence="1">Contains a degenerate basic motif not likely to bind DNA.</text>
</comment>
<comment type="sequence caution" evidence="7">
    <conflict type="erroneous gene model prediction">
        <sequence resource="EMBL-CDS" id="BAC57731"/>
    </conflict>
</comment>
<comment type="sequence caution" evidence="7">
    <conflict type="erroneous gene model prediction">
        <sequence resource="EMBL-CDS" id="BAH93976"/>
    </conflict>
</comment>
<organism>
    <name type="scientific">Oryza sativa subsp. japonica</name>
    <name type="common">Rice</name>
    <dbReference type="NCBI Taxonomy" id="39947"/>
    <lineage>
        <taxon>Eukaryota</taxon>
        <taxon>Viridiplantae</taxon>
        <taxon>Streptophyta</taxon>
        <taxon>Embryophyta</taxon>
        <taxon>Tracheophyta</taxon>
        <taxon>Spermatophyta</taxon>
        <taxon>Magnoliopsida</taxon>
        <taxon>Liliopsida</taxon>
        <taxon>Poales</taxon>
        <taxon>Poaceae</taxon>
        <taxon>BOP clade</taxon>
        <taxon>Oryzoideae</taxon>
        <taxon>Oryzeae</taxon>
        <taxon>Oryzinae</taxon>
        <taxon>Oryza</taxon>
        <taxon>Oryza sativa</taxon>
    </lineage>
</organism>
<feature type="chain" id="PRO_0000436455" description="Transcription factor UDT1">
    <location>
        <begin position="1"/>
        <end position="234"/>
    </location>
</feature>
<feature type="domain" description="bHLH" evidence="1">
    <location>
        <begin position="61"/>
        <end position="110"/>
    </location>
</feature>
<feature type="region of interest" description="Disordered" evidence="2">
    <location>
        <begin position="1"/>
        <end position="51"/>
    </location>
</feature>
<feature type="region of interest" description="Basic motif; degenerate" evidence="1">
    <location>
        <begin position="61"/>
        <end position="74"/>
    </location>
</feature>
<feature type="region of interest" description="Helix-loop-helix motif" evidence="1">
    <location>
        <begin position="75"/>
        <end position="110"/>
    </location>
</feature>
<feature type="compositionally biased region" description="Acidic residues" evidence="2">
    <location>
        <begin position="37"/>
        <end position="48"/>
    </location>
</feature>
<feature type="sequence conflict" description="In Ref. 1; AAX55226." evidence="7" ref="1">
    <original>G</original>
    <variation>S</variation>
    <location>
        <position position="10"/>
    </location>
</feature>
<feature type="sequence conflict" description="In Ref. 1; AAX55226." evidence="7" ref="1">
    <original>I</original>
    <variation>V</variation>
    <location>
        <position position="25"/>
    </location>
</feature>
<feature type="sequence conflict" description="In Ref. 1; AAX55226." evidence="7" ref="1">
    <original>C</original>
    <variation>G</variation>
    <location>
        <position position="133"/>
    </location>
</feature>
<feature type="sequence conflict" description="In Ref. 1; AAX55226." evidence="7" ref="1">
    <original>C</original>
    <variation>S</variation>
    <location>
        <position position="161"/>
    </location>
</feature>
<protein>
    <recommendedName>
        <fullName evidence="7">Transcription factor UDT1</fullName>
    </recommendedName>
    <alternativeName>
        <fullName evidence="7">Basic helix-loop-helix protein 164</fullName>
        <shortName evidence="6">OsbHLH164</shortName>
    </alternativeName>
    <alternativeName>
        <fullName evidence="5">Protein UNDEVELOPED TAPETUM 1</fullName>
    </alternativeName>
</protein>
<sequence>MPRRARARGGGGGGGEEVKVEDDFIDSVLNFGGGGGGEEDGDDGEEEQQQQQAAAAAMGKEFKSKNLEAERRRRGRLNGNIFALRAVVPKITKMSKEATLSDAIEHIKNLQNEVLELQRQLGDSPGEAWEKQCSASCSESFVPTENAHYQGQVELISLGSCKYNLKIFWTKRAGLFTKVLEALCSYKVQVLSLNTISFYGYAESFFTIEVKGEQDVVMVELRSLLSSIVEVPSI</sequence>
<evidence type="ECO:0000255" key="1">
    <source>
        <dbReference type="PROSITE-ProRule" id="PRU00981"/>
    </source>
</evidence>
<evidence type="ECO:0000256" key="2">
    <source>
        <dbReference type="SAM" id="MobiDB-lite"/>
    </source>
</evidence>
<evidence type="ECO:0000269" key="3">
    <source>
    </source>
</evidence>
<evidence type="ECO:0000269" key="4">
    <source>
    </source>
</evidence>
<evidence type="ECO:0000303" key="5">
    <source>
    </source>
</evidence>
<evidence type="ECO:0000303" key="6">
    <source>
    </source>
</evidence>
<evidence type="ECO:0000305" key="7"/>
<evidence type="ECO:0000312" key="8">
    <source>
        <dbReference type="EMBL" id="BAC57731.1"/>
    </source>
</evidence>
<evidence type="ECO:0000312" key="9">
    <source>
        <dbReference type="EMBL" id="BAT02035.1"/>
    </source>
</evidence>
<evidence type="ECO:0000312" key="10">
    <source>
        <dbReference type="EMBL" id="EEE67370.1"/>
    </source>
</evidence>
<proteinExistence type="evidence at transcript level"/>
<name>UDT1_ORYSJ</name>
<reference key="1">
    <citation type="journal article" date="2005" name="Plant Cell">
        <title>Rice undeveloped tapetum1 is a major regulator of early tapetum development.</title>
        <authorList>
            <person name="Jung K.H."/>
            <person name="Han M.J."/>
            <person name="Lee Y.S."/>
            <person name="Kim Y.W."/>
            <person name="Hwang I."/>
            <person name="Kim M.J."/>
            <person name="Kim Y.K."/>
            <person name="Nahm B.H."/>
            <person name="An G."/>
        </authorList>
    </citation>
    <scope>NUCLEOTIDE SEQUENCE [GENOMIC DNA]</scope>
    <scope>FUNCTION</scope>
    <scope>SUBCELLULAR LOCATION</scope>
    <scope>DEVELOPMENTAL STAGE</scope>
    <scope>DISRUPTION PHENOTYPE</scope>
    <source>
        <strain>cv. Dongjin</strain>
        <tissue>Anther</tissue>
    </source>
</reference>
<reference key="2">
    <citation type="journal article" date="2005" name="Nature">
        <title>The map-based sequence of the rice genome.</title>
        <authorList>
            <consortium name="International rice genome sequencing project (IRGSP)"/>
        </authorList>
    </citation>
    <scope>NUCLEOTIDE SEQUENCE [LARGE SCALE GENOMIC DNA]</scope>
    <source>
        <strain>cv. Nipponbare</strain>
    </source>
</reference>
<reference key="3">
    <citation type="journal article" date="2008" name="Nucleic Acids Res.">
        <title>The rice annotation project database (RAP-DB): 2008 update.</title>
        <authorList>
            <consortium name="The rice annotation project (RAP)"/>
        </authorList>
    </citation>
    <scope>GENOME REANNOTATION</scope>
    <source>
        <strain>cv. Nipponbare</strain>
    </source>
</reference>
<reference key="4">
    <citation type="journal article" date="2013" name="Rice">
        <title>Improvement of the Oryza sativa Nipponbare reference genome using next generation sequence and optical map data.</title>
        <authorList>
            <person name="Kawahara Y."/>
            <person name="de la Bastide M."/>
            <person name="Hamilton J.P."/>
            <person name="Kanamori H."/>
            <person name="McCombie W.R."/>
            <person name="Ouyang S."/>
            <person name="Schwartz D.C."/>
            <person name="Tanaka T."/>
            <person name="Wu J."/>
            <person name="Zhou S."/>
            <person name="Childs K.L."/>
            <person name="Davidson R.M."/>
            <person name="Lin H."/>
            <person name="Quesada-Ocampo L."/>
            <person name="Vaillancourt B."/>
            <person name="Sakai H."/>
            <person name="Lee S.S."/>
            <person name="Kim J."/>
            <person name="Numa H."/>
            <person name="Itoh T."/>
            <person name="Buell C.R."/>
            <person name="Matsumoto T."/>
        </authorList>
    </citation>
    <scope>GENOME REANNOTATION</scope>
    <source>
        <strain>cv. Nipponbare</strain>
    </source>
</reference>
<reference key="5">
    <citation type="journal article" date="2005" name="PLoS Biol.">
        <title>The genomes of Oryza sativa: a history of duplications.</title>
        <authorList>
            <person name="Yu J."/>
            <person name="Wang J."/>
            <person name="Lin W."/>
            <person name="Li S."/>
            <person name="Li H."/>
            <person name="Zhou J."/>
            <person name="Ni P."/>
            <person name="Dong W."/>
            <person name="Hu S."/>
            <person name="Zeng C."/>
            <person name="Zhang J."/>
            <person name="Zhang Y."/>
            <person name="Li R."/>
            <person name="Xu Z."/>
            <person name="Li S."/>
            <person name="Li X."/>
            <person name="Zheng H."/>
            <person name="Cong L."/>
            <person name="Lin L."/>
            <person name="Yin J."/>
            <person name="Geng J."/>
            <person name="Li G."/>
            <person name="Shi J."/>
            <person name="Liu J."/>
            <person name="Lv H."/>
            <person name="Li J."/>
            <person name="Wang J."/>
            <person name="Deng Y."/>
            <person name="Ran L."/>
            <person name="Shi X."/>
            <person name="Wang X."/>
            <person name="Wu Q."/>
            <person name="Li C."/>
            <person name="Ren X."/>
            <person name="Wang J."/>
            <person name="Wang X."/>
            <person name="Li D."/>
            <person name="Liu D."/>
            <person name="Zhang X."/>
            <person name="Ji Z."/>
            <person name="Zhao W."/>
            <person name="Sun Y."/>
            <person name="Zhang Z."/>
            <person name="Bao J."/>
            <person name="Han Y."/>
            <person name="Dong L."/>
            <person name="Ji J."/>
            <person name="Chen P."/>
            <person name="Wu S."/>
            <person name="Liu J."/>
            <person name="Xiao Y."/>
            <person name="Bu D."/>
            <person name="Tan J."/>
            <person name="Yang L."/>
            <person name="Ye C."/>
            <person name="Zhang J."/>
            <person name="Xu J."/>
            <person name="Zhou Y."/>
            <person name="Yu Y."/>
            <person name="Zhang B."/>
            <person name="Zhuang S."/>
            <person name="Wei H."/>
            <person name="Liu B."/>
            <person name="Lei M."/>
            <person name="Yu H."/>
            <person name="Li Y."/>
            <person name="Xu H."/>
            <person name="Wei S."/>
            <person name="He X."/>
            <person name="Fang L."/>
            <person name="Zhang Z."/>
            <person name="Zhang Y."/>
            <person name="Huang X."/>
            <person name="Su Z."/>
            <person name="Tong W."/>
            <person name="Li J."/>
            <person name="Tong Z."/>
            <person name="Li S."/>
            <person name="Ye J."/>
            <person name="Wang L."/>
            <person name="Fang L."/>
            <person name="Lei T."/>
            <person name="Chen C.-S."/>
            <person name="Chen H.-C."/>
            <person name="Xu Z."/>
            <person name="Li H."/>
            <person name="Huang H."/>
            <person name="Zhang F."/>
            <person name="Xu H."/>
            <person name="Li N."/>
            <person name="Zhao C."/>
            <person name="Li S."/>
            <person name="Dong L."/>
            <person name="Huang Y."/>
            <person name="Li L."/>
            <person name="Xi Y."/>
            <person name="Qi Q."/>
            <person name="Li W."/>
            <person name="Zhang B."/>
            <person name="Hu W."/>
            <person name="Zhang Y."/>
            <person name="Tian X."/>
            <person name="Jiao Y."/>
            <person name="Liang X."/>
            <person name="Jin J."/>
            <person name="Gao L."/>
            <person name="Zheng W."/>
            <person name="Hao B."/>
            <person name="Liu S.-M."/>
            <person name="Wang W."/>
            <person name="Yuan L."/>
            <person name="Cao M."/>
            <person name="McDermott J."/>
            <person name="Samudrala R."/>
            <person name="Wang J."/>
            <person name="Wong G.K.-S."/>
            <person name="Yang H."/>
        </authorList>
    </citation>
    <scope>NUCLEOTIDE SEQUENCE [LARGE SCALE GENOMIC DNA]</scope>
    <source>
        <strain>cv. Nipponbare</strain>
    </source>
</reference>
<reference key="6">
    <citation type="submission" date="2006-10" db="EMBL/GenBank/DDBJ databases">
        <title>Oryza sativa full length cDNA.</title>
        <authorList>
            <consortium name="The rice full-length cDNA consortium"/>
        </authorList>
    </citation>
    <scope>NUCLEOTIDE SEQUENCE [LARGE SCALE MRNA] OF 28-234</scope>
    <source>
        <strain>cv. Nipponbare</strain>
    </source>
</reference>
<reference key="7">
    <citation type="journal article" date="2006" name="Plant Physiol.">
        <title>Genome-wide analysis of basic/helix-loop-helix transcription factor family in rice and Arabidopsis.</title>
        <authorList>
            <person name="Li X."/>
            <person name="Duan X."/>
            <person name="Jiang H."/>
            <person name="Sun Y."/>
            <person name="Tang Y."/>
            <person name="Yuan Z."/>
            <person name="Guo J."/>
            <person name="Liang W."/>
            <person name="Chen L."/>
            <person name="Yin J."/>
            <person name="Ma H."/>
            <person name="Wang J."/>
            <person name="Zhang D."/>
        </authorList>
    </citation>
    <scope>GENE FAMILY</scope>
    <scope>NOMENCLATURE</scope>
</reference>
<reference key="8">
    <citation type="journal article" date="2010" name="J. Integr. Plant Biol.">
        <title>Identification of gamyb-4 and analysis of the regulatory role of GAMYB in rice anther development.</title>
        <authorList>
            <person name="Liu Z."/>
            <person name="Bao W."/>
            <person name="Liang W."/>
            <person name="Yin J."/>
            <person name="Zhang D."/>
        </authorList>
    </citation>
    <scope>FUNCTION</scope>
</reference>
<keyword id="KW-0217">Developmental protein</keyword>
<keyword id="KW-0539">Nucleus</keyword>
<keyword id="KW-1185">Reference proteome</keyword>
<keyword id="KW-0804">Transcription</keyword>
<keyword id="KW-0805">Transcription regulation</keyword>
<dbReference type="EMBL" id="AY953870">
    <property type="protein sequence ID" value="AAX55226.1"/>
    <property type="molecule type" value="Genomic_DNA"/>
</dbReference>
<dbReference type="EMBL" id="AP004401">
    <property type="protein sequence ID" value="BAC57731.1"/>
    <property type="status" value="ALT_SEQ"/>
    <property type="molecule type" value="Genomic_DNA"/>
</dbReference>
<dbReference type="EMBL" id="AP008213">
    <property type="protein sequence ID" value="BAH93976.1"/>
    <property type="status" value="ALT_SEQ"/>
    <property type="molecule type" value="Genomic_DNA"/>
</dbReference>
<dbReference type="EMBL" id="AP014963">
    <property type="protein sequence ID" value="BAT02035.1"/>
    <property type="molecule type" value="Genomic_DNA"/>
</dbReference>
<dbReference type="EMBL" id="CM000144">
    <property type="protein sequence ID" value="EEE67370.1"/>
    <property type="molecule type" value="Genomic_DNA"/>
</dbReference>
<dbReference type="EMBL" id="AK242516">
    <property type="status" value="NOT_ANNOTATED_CDS"/>
    <property type="molecule type" value="mRNA"/>
</dbReference>
<dbReference type="RefSeq" id="XP_015645913.1">
    <property type="nucleotide sequence ID" value="XM_015790427.1"/>
</dbReference>
<dbReference type="SMR" id="B9FXT3"/>
<dbReference type="FunCoup" id="B9FXT3">
    <property type="interactions" value="123"/>
</dbReference>
<dbReference type="STRING" id="39947.B9FXT3"/>
<dbReference type="PaxDb" id="39947-B9FXT3"/>
<dbReference type="KEGG" id="dosa:Os07g0549600"/>
<dbReference type="eggNOG" id="ENOG502SPJG">
    <property type="taxonomic scope" value="Eukaryota"/>
</dbReference>
<dbReference type="HOGENOM" id="CLU_108216_0_0_1"/>
<dbReference type="InParanoid" id="B9FXT3"/>
<dbReference type="OrthoDB" id="690068at2759"/>
<dbReference type="Proteomes" id="UP000000763">
    <property type="component" value="Chromosome 7"/>
</dbReference>
<dbReference type="Proteomes" id="UP000007752">
    <property type="component" value="Chromosome 7"/>
</dbReference>
<dbReference type="Proteomes" id="UP000059680">
    <property type="component" value="Chromosome 7"/>
</dbReference>
<dbReference type="GO" id="GO:0005634">
    <property type="term" value="C:nucleus"/>
    <property type="evidence" value="ECO:0000314"/>
    <property type="project" value="UniProtKB"/>
</dbReference>
<dbReference type="GO" id="GO:0003700">
    <property type="term" value="F:DNA-binding transcription factor activity"/>
    <property type="evidence" value="ECO:0000318"/>
    <property type="project" value="GO_Central"/>
</dbReference>
<dbReference type="GO" id="GO:0046983">
    <property type="term" value="F:protein dimerization activity"/>
    <property type="evidence" value="ECO:0007669"/>
    <property type="project" value="InterPro"/>
</dbReference>
<dbReference type="GO" id="GO:0043565">
    <property type="term" value="F:sequence-specific DNA binding"/>
    <property type="evidence" value="ECO:0000318"/>
    <property type="project" value="GO_Central"/>
</dbReference>
<dbReference type="GO" id="GO:0048658">
    <property type="term" value="P:anther wall tapetum development"/>
    <property type="evidence" value="ECO:0000315"/>
    <property type="project" value="UniProtKB"/>
</dbReference>
<dbReference type="GO" id="GO:0009555">
    <property type="term" value="P:pollen development"/>
    <property type="evidence" value="ECO:0000315"/>
    <property type="project" value="UniProtKB"/>
</dbReference>
<dbReference type="GO" id="GO:0006355">
    <property type="term" value="P:regulation of DNA-templated transcription"/>
    <property type="evidence" value="ECO:0000318"/>
    <property type="project" value="GO_Central"/>
</dbReference>
<dbReference type="CDD" id="cd11443">
    <property type="entry name" value="bHLH_AtAMS_like"/>
    <property type="match status" value="1"/>
</dbReference>
<dbReference type="Gene3D" id="4.10.280.10">
    <property type="entry name" value="Helix-loop-helix DNA-binding domain"/>
    <property type="match status" value="1"/>
</dbReference>
<dbReference type="InterPro" id="IPR011598">
    <property type="entry name" value="bHLH_dom"/>
</dbReference>
<dbReference type="InterPro" id="IPR036638">
    <property type="entry name" value="HLH_DNA-bd_sf"/>
</dbReference>
<dbReference type="InterPro" id="IPR051358">
    <property type="entry name" value="TF_AMS/ICE1/BHLH6-like"/>
</dbReference>
<dbReference type="PANTHER" id="PTHR31945">
    <property type="entry name" value="TRANSCRIPTION FACTOR SCREAM2-RELATED"/>
    <property type="match status" value="1"/>
</dbReference>
<dbReference type="PANTHER" id="PTHR31945:SF68">
    <property type="entry name" value="TRANSCRIPTION FACTOR UDT1"/>
    <property type="match status" value="1"/>
</dbReference>
<dbReference type="Pfam" id="PF00010">
    <property type="entry name" value="HLH"/>
    <property type="match status" value="1"/>
</dbReference>
<dbReference type="SMART" id="SM00353">
    <property type="entry name" value="HLH"/>
    <property type="match status" value="1"/>
</dbReference>
<dbReference type="SUPFAM" id="SSF47459">
    <property type="entry name" value="HLH, helix-loop-helix DNA-binding domain"/>
    <property type="match status" value="1"/>
</dbReference>
<dbReference type="PROSITE" id="PS50888">
    <property type="entry name" value="BHLH"/>
    <property type="match status" value="1"/>
</dbReference>
<gene>
    <name evidence="5" type="primary">UDT1</name>
    <name evidence="7" type="synonym">BHLH164</name>
    <name evidence="9" type="ordered locus">Os07g0549600</name>
    <name evidence="7" type="ordered locus">LOC_Os07g36460</name>
    <name evidence="10" type="ORF">OsJ_24663</name>
    <name evidence="8" type="ORF">P0534A03.125</name>
</gene>